<sequence length="255" mass="28448">MWIGIISLFPEMFRAITDYGVTGRAVKNGLLSIQSWSPRDFTYDRHRTVDDRPYGGGPGMLMMVQPLRDAIHAAKAAAGEGAKVIYLSPQGRKLDQAGVSELATNQKLILVCGRYEGIDERVIQTEIDEEWSIGDYVLSGGELPAMTLIDSVSRFIPGVLGHEASATEDSFAEGLLDCPHYTRPEVLEGMEVPPVLLSGNHAEIRRWRLKQSLGRTWLRRPELLENLALTEEQARLLAEFKTEHAQQQHKHDGMA</sequence>
<feature type="chain" id="PRO_1000198570" description="tRNA (guanine-N(1)-)-methyltransferase">
    <location>
        <begin position="1"/>
        <end position="255"/>
    </location>
</feature>
<feature type="binding site" evidence="1">
    <location>
        <position position="113"/>
    </location>
    <ligand>
        <name>S-adenosyl-L-methionine</name>
        <dbReference type="ChEBI" id="CHEBI:59789"/>
    </ligand>
</feature>
<feature type="binding site" evidence="1">
    <location>
        <begin position="133"/>
        <end position="138"/>
    </location>
    <ligand>
        <name>S-adenosyl-L-methionine</name>
        <dbReference type="ChEBI" id="CHEBI:59789"/>
    </ligand>
</feature>
<gene>
    <name evidence="1" type="primary">trmD</name>
    <name type="ordered locus">E2348C_2896</name>
</gene>
<protein>
    <recommendedName>
        <fullName evidence="1">tRNA (guanine-N(1)-)-methyltransferase</fullName>
        <ecNumber evidence="1">2.1.1.228</ecNumber>
    </recommendedName>
    <alternativeName>
        <fullName evidence="1">M1G-methyltransferase</fullName>
    </alternativeName>
    <alternativeName>
        <fullName evidence="1">tRNA [GM37] methyltransferase</fullName>
    </alternativeName>
</protein>
<reference key="1">
    <citation type="journal article" date="2009" name="J. Bacteriol.">
        <title>Complete genome sequence and comparative genome analysis of enteropathogenic Escherichia coli O127:H6 strain E2348/69.</title>
        <authorList>
            <person name="Iguchi A."/>
            <person name="Thomson N.R."/>
            <person name="Ogura Y."/>
            <person name="Saunders D."/>
            <person name="Ooka T."/>
            <person name="Henderson I.R."/>
            <person name="Harris D."/>
            <person name="Asadulghani M."/>
            <person name="Kurokawa K."/>
            <person name="Dean P."/>
            <person name="Kenny B."/>
            <person name="Quail M.A."/>
            <person name="Thurston S."/>
            <person name="Dougan G."/>
            <person name="Hayashi T."/>
            <person name="Parkhill J."/>
            <person name="Frankel G."/>
        </authorList>
    </citation>
    <scope>NUCLEOTIDE SEQUENCE [LARGE SCALE GENOMIC DNA]</scope>
    <source>
        <strain>E2348/69 / EPEC</strain>
    </source>
</reference>
<keyword id="KW-0963">Cytoplasm</keyword>
<keyword id="KW-0489">Methyltransferase</keyword>
<keyword id="KW-1185">Reference proteome</keyword>
<keyword id="KW-0949">S-adenosyl-L-methionine</keyword>
<keyword id="KW-0808">Transferase</keyword>
<keyword id="KW-0819">tRNA processing</keyword>
<proteinExistence type="inferred from homology"/>
<organism>
    <name type="scientific">Escherichia coli O127:H6 (strain E2348/69 / EPEC)</name>
    <dbReference type="NCBI Taxonomy" id="574521"/>
    <lineage>
        <taxon>Bacteria</taxon>
        <taxon>Pseudomonadati</taxon>
        <taxon>Pseudomonadota</taxon>
        <taxon>Gammaproteobacteria</taxon>
        <taxon>Enterobacterales</taxon>
        <taxon>Enterobacteriaceae</taxon>
        <taxon>Escherichia</taxon>
    </lineage>
</organism>
<evidence type="ECO:0000255" key="1">
    <source>
        <dbReference type="HAMAP-Rule" id="MF_00605"/>
    </source>
</evidence>
<name>TRMD_ECO27</name>
<dbReference type="EC" id="2.1.1.228" evidence="1"/>
<dbReference type="EMBL" id="FM180568">
    <property type="protein sequence ID" value="CAS10444.1"/>
    <property type="molecule type" value="Genomic_DNA"/>
</dbReference>
<dbReference type="RefSeq" id="WP_000264790.1">
    <property type="nucleotide sequence ID" value="NC_011601.1"/>
</dbReference>
<dbReference type="SMR" id="B7UH56"/>
<dbReference type="KEGG" id="ecg:E2348C_2896"/>
<dbReference type="HOGENOM" id="CLU_047363_0_1_6"/>
<dbReference type="Proteomes" id="UP000008205">
    <property type="component" value="Chromosome"/>
</dbReference>
<dbReference type="GO" id="GO:0005829">
    <property type="term" value="C:cytosol"/>
    <property type="evidence" value="ECO:0007669"/>
    <property type="project" value="TreeGrafter"/>
</dbReference>
<dbReference type="GO" id="GO:0052906">
    <property type="term" value="F:tRNA (guanine(37)-N1)-methyltransferase activity"/>
    <property type="evidence" value="ECO:0007669"/>
    <property type="project" value="UniProtKB-UniRule"/>
</dbReference>
<dbReference type="GO" id="GO:0002939">
    <property type="term" value="P:tRNA N1-guanine methylation"/>
    <property type="evidence" value="ECO:0007669"/>
    <property type="project" value="TreeGrafter"/>
</dbReference>
<dbReference type="CDD" id="cd18080">
    <property type="entry name" value="TrmD-like"/>
    <property type="match status" value="1"/>
</dbReference>
<dbReference type="FunFam" id="1.10.1270.20:FF:000001">
    <property type="entry name" value="tRNA (guanine-N(1)-)-methyltransferase"/>
    <property type="match status" value="1"/>
</dbReference>
<dbReference type="FunFam" id="3.40.1280.10:FF:000001">
    <property type="entry name" value="tRNA (guanine-N(1)-)-methyltransferase"/>
    <property type="match status" value="1"/>
</dbReference>
<dbReference type="Gene3D" id="3.40.1280.10">
    <property type="match status" value="1"/>
</dbReference>
<dbReference type="Gene3D" id="1.10.1270.20">
    <property type="entry name" value="tRNA(m1g37)methyltransferase, domain 2"/>
    <property type="match status" value="1"/>
</dbReference>
<dbReference type="HAMAP" id="MF_00605">
    <property type="entry name" value="TrmD"/>
    <property type="match status" value="1"/>
</dbReference>
<dbReference type="InterPro" id="IPR029028">
    <property type="entry name" value="Alpha/beta_knot_MTases"/>
</dbReference>
<dbReference type="InterPro" id="IPR023148">
    <property type="entry name" value="tRNA_m1G_MeTrfase_C_sf"/>
</dbReference>
<dbReference type="InterPro" id="IPR002649">
    <property type="entry name" value="tRNA_m1G_MeTrfase_TrmD"/>
</dbReference>
<dbReference type="InterPro" id="IPR029026">
    <property type="entry name" value="tRNA_m1G_MTases_N"/>
</dbReference>
<dbReference type="InterPro" id="IPR016009">
    <property type="entry name" value="tRNA_MeTrfase_TRMD/TRM10"/>
</dbReference>
<dbReference type="NCBIfam" id="NF000648">
    <property type="entry name" value="PRK00026.1"/>
    <property type="match status" value="1"/>
</dbReference>
<dbReference type="NCBIfam" id="TIGR00088">
    <property type="entry name" value="trmD"/>
    <property type="match status" value="1"/>
</dbReference>
<dbReference type="PANTHER" id="PTHR46417">
    <property type="entry name" value="TRNA (GUANINE-N(1)-)-METHYLTRANSFERASE"/>
    <property type="match status" value="1"/>
</dbReference>
<dbReference type="PANTHER" id="PTHR46417:SF1">
    <property type="entry name" value="TRNA (GUANINE-N(1)-)-METHYLTRANSFERASE"/>
    <property type="match status" value="1"/>
</dbReference>
<dbReference type="Pfam" id="PF01746">
    <property type="entry name" value="tRNA_m1G_MT"/>
    <property type="match status" value="1"/>
</dbReference>
<dbReference type="PIRSF" id="PIRSF000386">
    <property type="entry name" value="tRNA_mtase"/>
    <property type="match status" value="1"/>
</dbReference>
<dbReference type="SUPFAM" id="SSF75217">
    <property type="entry name" value="alpha/beta knot"/>
    <property type="match status" value="1"/>
</dbReference>
<accession>B7UH56</accession>
<comment type="function">
    <text evidence="1">Specifically methylates guanosine-37 in various tRNAs.</text>
</comment>
<comment type="catalytic activity">
    <reaction evidence="1">
        <text>guanosine(37) in tRNA + S-adenosyl-L-methionine = N(1)-methylguanosine(37) in tRNA + S-adenosyl-L-homocysteine + H(+)</text>
        <dbReference type="Rhea" id="RHEA:36899"/>
        <dbReference type="Rhea" id="RHEA-COMP:10145"/>
        <dbReference type="Rhea" id="RHEA-COMP:10147"/>
        <dbReference type="ChEBI" id="CHEBI:15378"/>
        <dbReference type="ChEBI" id="CHEBI:57856"/>
        <dbReference type="ChEBI" id="CHEBI:59789"/>
        <dbReference type="ChEBI" id="CHEBI:73542"/>
        <dbReference type="ChEBI" id="CHEBI:74269"/>
        <dbReference type="EC" id="2.1.1.228"/>
    </reaction>
</comment>
<comment type="subunit">
    <text evidence="1">Homodimer.</text>
</comment>
<comment type="subcellular location">
    <subcellularLocation>
        <location evidence="1">Cytoplasm</location>
    </subcellularLocation>
</comment>
<comment type="similarity">
    <text evidence="1">Belongs to the RNA methyltransferase TrmD family.</text>
</comment>